<organism>
    <name type="scientific">Maridesulfovibrio salexigens (strain ATCC 14822 / DSM 2638 / NCIMB 8403 / VKM B-1763)</name>
    <name type="common">Desulfovibrio salexigens</name>
    <dbReference type="NCBI Taxonomy" id="526222"/>
    <lineage>
        <taxon>Bacteria</taxon>
        <taxon>Pseudomonadati</taxon>
        <taxon>Thermodesulfobacteriota</taxon>
        <taxon>Desulfovibrionia</taxon>
        <taxon>Desulfovibrionales</taxon>
        <taxon>Desulfovibrionaceae</taxon>
        <taxon>Maridesulfovibrio</taxon>
    </lineage>
</organism>
<accession>C6C0N2</accession>
<reference key="1">
    <citation type="submission" date="2009-06" db="EMBL/GenBank/DDBJ databases">
        <title>Complete sequence of Desulfovibrio salexigens DSM 2638.</title>
        <authorList>
            <consortium name="US DOE Joint Genome Institute"/>
            <person name="Lucas S."/>
            <person name="Copeland A."/>
            <person name="Lapidus A."/>
            <person name="Glavina del Rio T."/>
            <person name="Tice H."/>
            <person name="Bruce D."/>
            <person name="Goodwin L."/>
            <person name="Pitluck S."/>
            <person name="Munk A.C."/>
            <person name="Brettin T."/>
            <person name="Detter J.C."/>
            <person name="Han C."/>
            <person name="Tapia R."/>
            <person name="Larimer F."/>
            <person name="Land M."/>
            <person name="Hauser L."/>
            <person name="Kyrpides N."/>
            <person name="Anderson I."/>
            <person name="Wall J.D."/>
            <person name="Arkin A.P."/>
            <person name="Dehal P."/>
            <person name="Chivian D."/>
            <person name="Giles B."/>
            <person name="Hazen T.C."/>
        </authorList>
    </citation>
    <scope>NUCLEOTIDE SEQUENCE [LARGE SCALE GENOMIC DNA]</scope>
    <source>
        <strain>ATCC 14822 / DSM 2638 / NCIMB 8403 / VKM B-1763</strain>
    </source>
</reference>
<proteinExistence type="inferred from homology"/>
<comment type="function">
    <text evidence="1">Hydrolyzes ribosome-free peptidyl-tRNAs (with 1 or more amino acids incorporated), which drop off the ribosome during protein synthesis, or as a result of ribosome stalling.</text>
</comment>
<comment type="function">
    <text evidence="1">Catalyzes the release of premature peptidyl moieties from peptidyl-tRNA molecules trapped in stalled 50S ribosomal subunits, and thus maintains levels of free tRNAs and 50S ribosomes.</text>
</comment>
<comment type="catalytic activity">
    <reaction evidence="1">
        <text>an N-acyl-L-alpha-aminoacyl-tRNA + H2O = an N-acyl-L-amino acid + a tRNA + H(+)</text>
        <dbReference type="Rhea" id="RHEA:54448"/>
        <dbReference type="Rhea" id="RHEA-COMP:10123"/>
        <dbReference type="Rhea" id="RHEA-COMP:13883"/>
        <dbReference type="ChEBI" id="CHEBI:15377"/>
        <dbReference type="ChEBI" id="CHEBI:15378"/>
        <dbReference type="ChEBI" id="CHEBI:59874"/>
        <dbReference type="ChEBI" id="CHEBI:78442"/>
        <dbReference type="ChEBI" id="CHEBI:138191"/>
        <dbReference type="EC" id="3.1.1.29"/>
    </reaction>
</comment>
<comment type="subunit">
    <text evidence="1">Monomer.</text>
</comment>
<comment type="subcellular location">
    <subcellularLocation>
        <location evidence="1">Cytoplasm</location>
    </subcellularLocation>
</comment>
<comment type="similarity">
    <text evidence="1">Belongs to the PTH family.</text>
</comment>
<name>PTH_MARSD</name>
<protein>
    <recommendedName>
        <fullName evidence="1">Peptidyl-tRNA hydrolase</fullName>
        <shortName evidence="1">Pth</shortName>
        <ecNumber evidence="1">3.1.1.29</ecNumber>
    </recommendedName>
</protein>
<feature type="chain" id="PRO_1000202578" description="Peptidyl-tRNA hydrolase">
    <location>
        <begin position="1"/>
        <end position="205"/>
    </location>
</feature>
<feature type="active site" description="Proton acceptor" evidence="1">
    <location>
        <position position="22"/>
    </location>
</feature>
<feature type="binding site" evidence="1">
    <location>
        <position position="17"/>
    </location>
    <ligand>
        <name>tRNA</name>
        <dbReference type="ChEBI" id="CHEBI:17843"/>
    </ligand>
</feature>
<feature type="binding site" evidence="1">
    <location>
        <position position="73"/>
    </location>
    <ligand>
        <name>tRNA</name>
        <dbReference type="ChEBI" id="CHEBI:17843"/>
    </ligand>
</feature>
<feature type="binding site" evidence="1">
    <location>
        <position position="75"/>
    </location>
    <ligand>
        <name>tRNA</name>
        <dbReference type="ChEBI" id="CHEBI:17843"/>
    </ligand>
</feature>
<feature type="site" description="Discriminates between blocked and unblocked aminoacyl-tRNA" evidence="1">
    <location>
        <position position="12"/>
    </location>
</feature>
<feature type="site" description="Stabilizes the basic form of H active site to accept a proton" evidence="1">
    <location>
        <position position="100"/>
    </location>
</feature>
<keyword id="KW-0963">Cytoplasm</keyword>
<keyword id="KW-0378">Hydrolase</keyword>
<keyword id="KW-1185">Reference proteome</keyword>
<keyword id="KW-0694">RNA-binding</keyword>
<keyword id="KW-0820">tRNA-binding</keyword>
<evidence type="ECO:0000255" key="1">
    <source>
        <dbReference type="HAMAP-Rule" id="MF_00083"/>
    </source>
</evidence>
<gene>
    <name evidence="1" type="primary">pth</name>
    <name type="ordered locus">Desal_2927</name>
</gene>
<sequence length="205" mass="22506">MEYKALIVGLGNPGSEYAKTRHNIGFMAVDALAEVAKSRKSMRFKEMGISGDFELFSLNLAGNNVLATKPLTYMNLSGKAVAAICGKYSIAVSDVYVIHDELDLPCGRMKFKKGGGNNGHRGLESIQEKMGSPNFFRIRVGIGRPEFSSQVKDYVLEEFNTQELAIAAQMSQAAIKGLNLHFRRGQGTATQFMNSFMPDLPETEP</sequence>
<dbReference type="EC" id="3.1.1.29" evidence="1"/>
<dbReference type="EMBL" id="CP001649">
    <property type="protein sequence ID" value="ACS80979.1"/>
    <property type="molecule type" value="Genomic_DNA"/>
</dbReference>
<dbReference type="RefSeq" id="WP_015852795.1">
    <property type="nucleotide sequence ID" value="NC_012881.1"/>
</dbReference>
<dbReference type="SMR" id="C6C0N2"/>
<dbReference type="STRING" id="526222.Desal_2927"/>
<dbReference type="KEGG" id="dsa:Desal_2927"/>
<dbReference type="eggNOG" id="COG0193">
    <property type="taxonomic scope" value="Bacteria"/>
</dbReference>
<dbReference type="HOGENOM" id="CLU_062456_3_1_7"/>
<dbReference type="OrthoDB" id="9800507at2"/>
<dbReference type="Proteomes" id="UP000002601">
    <property type="component" value="Chromosome"/>
</dbReference>
<dbReference type="GO" id="GO:0005737">
    <property type="term" value="C:cytoplasm"/>
    <property type="evidence" value="ECO:0007669"/>
    <property type="project" value="UniProtKB-SubCell"/>
</dbReference>
<dbReference type="GO" id="GO:0004045">
    <property type="term" value="F:peptidyl-tRNA hydrolase activity"/>
    <property type="evidence" value="ECO:0007669"/>
    <property type="project" value="UniProtKB-UniRule"/>
</dbReference>
<dbReference type="GO" id="GO:0000049">
    <property type="term" value="F:tRNA binding"/>
    <property type="evidence" value="ECO:0007669"/>
    <property type="project" value="UniProtKB-UniRule"/>
</dbReference>
<dbReference type="GO" id="GO:0006515">
    <property type="term" value="P:protein quality control for misfolded or incompletely synthesized proteins"/>
    <property type="evidence" value="ECO:0007669"/>
    <property type="project" value="UniProtKB-UniRule"/>
</dbReference>
<dbReference type="GO" id="GO:0072344">
    <property type="term" value="P:rescue of stalled ribosome"/>
    <property type="evidence" value="ECO:0007669"/>
    <property type="project" value="UniProtKB-UniRule"/>
</dbReference>
<dbReference type="CDD" id="cd00462">
    <property type="entry name" value="PTH"/>
    <property type="match status" value="1"/>
</dbReference>
<dbReference type="FunFam" id="3.40.50.1470:FF:000001">
    <property type="entry name" value="Peptidyl-tRNA hydrolase"/>
    <property type="match status" value="1"/>
</dbReference>
<dbReference type="Gene3D" id="3.40.50.1470">
    <property type="entry name" value="Peptidyl-tRNA hydrolase"/>
    <property type="match status" value="1"/>
</dbReference>
<dbReference type="HAMAP" id="MF_00083">
    <property type="entry name" value="Pept_tRNA_hydro_bact"/>
    <property type="match status" value="1"/>
</dbReference>
<dbReference type="InterPro" id="IPR001328">
    <property type="entry name" value="Pept_tRNA_hydro"/>
</dbReference>
<dbReference type="InterPro" id="IPR018171">
    <property type="entry name" value="Pept_tRNA_hydro_CS"/>
</dbReference>
<dbReference type="InterPro" id="IPR036416">
    <property type="entry name" value="Pept_tRNA_hydro_sf"/>
</dbReference>
<dbReference type="NCBIfam" id="TIGR00447">
    <property type="entry name" value="pth"/>
    <property type="match status" value="1"/>
</dbReference>
<dbReference type="PANTHER" id="PTHR17224">
    <property type="entry name" value="PEPTIDYL-TRNA HYDROLASE"/>
    <property type="match status" value="1"/>
</dbReference>
<dbReference type="PANTHER" id="PTHR17224:SF1">
    <property type="entry name" value="PEPTIDYL-TRNA HYDROLASE"/>
    <property type="match status" value="1"/>
</dbReference>
<dbReference type="Pfam" id="PF01195">
    <property type="entry name" value="Pept_tRNA_hydro"/>
    <property type="match status" value="1"/>
</dbReference>
<dbReference type="SUPFAM" id="SSF53178">
    <property type="entry name" value="Peptidyl-tRNA hydrolase-like"/>
    <property type="match status" value="1"/>
</dbReference>
<dbReference type="PROSITE" id="PS01195">
    <property type="entry name" value="PEPT_TRNA_HYDROL_1"/>
    <property type="match status" value="1"/>
</dbReference>